<name>HNT2_YEAST</name>
<reference key="1">
    <citation type="journal article" date="1997" name="Nature">
        <title>The nucleotide sequence of Saccharomyces cerevisiae chromosome IV.</title>
        <authorList>
            <person name="Jacq C."/>
            <person name="Alt-Moerbe J."/>
            <person name="Andre B."/>
            <person name="Arnold W."/>
            <person name="Bahr A."/>
            <person name="Ballesta J.P.G."/>
            <person name="Bargues M."/>
            <person name="Baron L."/>
            <person name="Becker A."/>
            <person name="Biteau N."/>
            <person name="Bloecker H."/>
            <person name="Blugeon C."/>
            <person name="Boskovic J."/>
            <person name="Brandt P."/>
            <person name="Brueckner M."/>
            <person name="Buitrago M.J."/>
            <person name="Coster F."/>
            <person name="Delaveau T."/>
            <person name="del Rey F."/>
            <person name="Dujon B."/>
            <person name="Eide L.G."/>
            <person name="Garcia-Cantalejo J.M."/>
            <person name="Goffeau A."/>
            <person name="Gomez-Peris A."/>
            <person name="Granotier C."/>
            <person name="Hanemann V."/>
            <person name="Hankeln T."/>
            <person name="Hoheisel J.D."/>
            <person name="Jaeger W."/>
            <person name="Jimenez A."/>
            <person name="Jonniaux J.-L."/>
            <person name="Kraemer C."/>
            <person name="Kuester H."/>
            <person name="Laamanen P."/>
            <person name="Legros Y."/>
            <person name="Louis E.J."/>
            <person name="Moeller-Rieker S."/>
            <person name="Monnet A."/>
            <person name="Moro M."/>
            <person name="Mueller-Auer S."/>
            <person name="Nussbaumer B."/>
            <person name="Paricio N."/>
            <person name="Paulin L."/>
            <person name="Perea J."/>
            <person name="Perez-Alonso M."/>
            <person name="Perez-Ortin J.E."/>
            <person name="Pohl T.M."/>
            <person name="Prydz H."/>
            <person name="Purnelle B."/>
            <person name="Rasmussen S.W."/>
            <person name="Remacha M.A."/>
            <person name="Revuelta J.L."/>
            <person name="Rieger M."/>
            <person name="Salom D."/>
            <person name="Saluz H.P."/>
            <person name="Saiz J.E."/>
            <person name="Saren A.-M."/>
            <person name="Schaefer M."/>
            <person name="Scharfe M."/>
            <person name="Schmidt E.R."/>
            <person name="Schneider C."/>
            <person name="Scholler P."/>
            <person name="Schwarz S."/>
            <person name="Soler-Mira A."/>
            <person name="Urrestarazu L.A."/>
            <person name="Verhasselt P."/>
            <person name="Vissers S."/>
            <person name="Voet M."/>
            <person name="Volckaert G."/>
            <person name="Wagner G."/>
            <person name="Wambutt R."/>
            <person name="Wedler E."/>
            <person name="Wedler H."/>
            <person name="Woelfl S."/>
            <person name="Harris D.E."/>
            <person name="Bowman S."/>
            <person name="Brown D."/>
            <person name="Churcher C.M."/>
            <person name="Connor R."/>
            <person name="Dedman K."/>
            <person name="Gentles S."/>
            <person name="Hamlin N."/>
            <person name="Hunt S."/>
            <person name="Jones L."/>
            <person name="McDonald S."/>
            <person name="Murphy L.D."/>
            <person name="Niblett D."/>
            <person name="Odell C."/>
            <person name="Oliver K."/>
            <person name="Rajandream M.A."/>
            <person name="Richards C."/>
            <person name="Shore L."/>
            <person name="Walsh S.V."/>
            <person name="Barrell B.G."/>
            <person name="Dietrich F.S."/>
            <person name="Mulligan J.T."/>
            <person name="Allen E."/>
            <person name="Araujo R."/>
            <person name="Aviles E."/>
            <person name="Berno A."/>
            <person name="Carpenter J."/>
            <person name="Chen E."/>
            <person name="Cherry J.M."/>
            <person name="Chung E."/>
            <person name="Duncan M."/>
            <person name="Hunicke-Smith S."/>
            <person name="Hyman R.W."/>
            <person name="Komp C."/>
            <person name="Lashkari D."/>
            <person name="Lew H."/>
            <person name="Lin D."/>
            <person name="Mosedale D."/>
            <person name="Nakahara K."/>
            <person name="Namath A."/>
            <person name="Oefner P."/>
            <person name="Oh C."/>
            <person name="Petel F.X."/>
            <person name="Roberts D."/>
            <person name="Schramm S."/>
            <person name="Schroeder M."/>
            <person name="Shogren T."/>
            <person name="Shroff N."/>
            <person name="Winant A."/>
            <person name="Yelton M.A."/>
            <person name="Botstein D."/>
            <person name="Davis R.W."/>
            <person name="Johnston M."/>
            <person name="Andrews S."/>
            <person name="Brinkman R."/>
            <person name="Cooper J."/>
            <person name="Ding H."/>
            <person name="Du Z."/>
            <person name="Favello A."/>
            <person name="Fulton L."/>
            <person name="Gattung S."/>
            <person name="Greco T."/>
            <person name="Hallsworth K."/>
            <person name="Hawkins J."/>
            <person name="Hillier L.W."/>
            <person name="Jier M."/>
            <person name="Johnson D."/>
            <person name="Johnston L."/>
            <person name="Kirsten J."/>
            <person name="Kucaba T."/>
            <person name="Langston Y."/>
            <person name="Latreille P."/>
            <person name="Le T."/>
            <person name="Mardis E."/>
            <person name="Menezes S."/>
            <person name="Miller N."/>
            <person name="Nhan M."/>
            <person name="Pauley A."/>
            <person name="Peluso D."/>
            <person name="Rifkin L."/>
            <person name="Riles L."/>
            <person name="Taich A."/>
            <person name="Trevaskis E."/>
            <person name="Vignati D."/>
            <person name="Wilcox L."/>
            <person name="Wohldman P."/>
            <person name="Vaudin M."/>
            <person name="Wilson R."/>
            <person name="Waterston R."/>
            <person name="Albermann K."/>
            <person name="Hani J."/>
            <person name="Heumann K."/>
            <person name="Kleine K."/>
            <person name="Mewes H.-W."/>
            <person name="Zollner A."/>
            <person name="Zaccaria P."/>
        </authorList>
    </citation>
    <scope>NUCLEOTIDE SEQUENCE [LARGE SCALE GENOMIC DNA]</scope>
    <source>
        <strain>ATCC 204508 / S288c</strain>
    </source>
</reference>
<reference key="2">
    <citation type="journal article" date="2014" name="G3 (Bethesda)">
        <title>The reference genome sequence of Saccharomyces cerevisiae: Then and now.</title>
        <authorList>
            <person name="Engel S.R."/>
            <person name="Dietrich F.S."/>
            <person name="Fisk D.G."/>
            <person name="Binkley G."/>
            <person name="Balakrishnan R."/>
            <person name="Costanzo M.C."/>
            <person name="Dwight S.S."/>
            <person name="Hitz B.C."/>
            <person name="Karra K."/>
            <person name="Nash R.S."/>
            <person name="Weng S."/>
            <person name="Wong E.D."/>
            <person name="Lloyd P."/>
            <person name="Skrzypek M.S."/>
            <person name="Miyasato S.R."/>
            <person name="Simison M."/>
            <person name="Cherry J.M."/>
        </authorList>
    </citation>
    <scope>GENOME REANNOTATION</scope>
    <source>
        <strain>ATCC 204508 / S288c</strain>
    </source>
</reference>
<reference key="3">
    <citation type="submission" date="2003-09" db="EMBL/GenBank/DDBJ databases">
        <title>Verification of 3' and 5' ends of S.cerevisiae transcripts.</title>
        <authorList>
            <person name="Kennedy M.C."/>
            <person name="Dietrich F.S."/>
        </authorList>
    </citation>
    <scope>NUCLEOTIDE SEQUENCE [MRNA] OF 1-72 AND 172-206</scope>
    <source>
        <strain>ATCC 204511 / S288c / AB972</strain>
    </source>
</reference>
<reference key="4">
    <citation type="journal article" date="1991" name="J. Bacteriol.">
        <title>Isolation and characterization of a dinucleoside triphosphatase from Saccharomyces cerevisiae.</title>
        <authorList>
            <person name="Brevet A."/>
            <person name="Chen J."/>
            <person name="Fromant M."/>
            <person name="Blanquet S."/>
            <person name="Plateau P."/>
        </authorList>
    </citation>
    <scope>BIOPHYSICOCHEMICAL PROPERTIES</scope>
</reference>
<reference key="5">
    <citation type="journal article" date="1998" name="J. Bacteriol.">
        <title>Control of 5',5'-dinucleoside triphosphate catabolism by APH1, a Saccharomyces cerevisiae analog of human FHIT.</title>
        <authorList>
            <person name="Chen J."/>
            <person name="Brevet A."/>
            <person name="Blanquet S."/>
            <person name="Plateau P."/>
        </authorList>
    </citation>
    <scope>FUNCTION</scope>
</reference>
<reference key="6">
    <citation type="journal article" date="2002" name="BMC Mol. Biol.">
        <title>Control of dinucleoside polyphosphates by the FHIT-homologous HNT2 gene, adenine biosynthesis and heat shock in Saccharomyces cerevisiae.</title>
        <authorList>
            <person name="Rubio-Texeira M."/>
            <person name="Varnum J.M."/>
            <person name="Bieganowski P."/>
            <person name="Brenner C."/>
        </authorList>
    </citation>
    <scope>FUNCTION</scope>
    <scope>ACTIVE SITE</scope>
    <scope>MUTAGENESIS OF HIS-98</scope>
</reference>
<reference key="7">
    <citation type="journal article" date="2003" name="Nature">
        <title>Global analysis of protein localization in budding yeast.</title>
        <authorList>
            <person name="Huh W.-K."/>
            <person name="Falvo J.V."/>
            <person name="Gerke L.C."/>
            <person name="Carroll A.S."/>
            <person name="Howson R.W."/>
            <person name="Weissman J.S."/>
            <person name="O'Shea E.K."/>
        </authorList>
    </citation>
    <scope>SUBCELLULAR LOCATION [LARGE SCALE ANALYSIS]</scope>
</reference>
<reference key="8">
    <citation type="journal article" date="2003" name="Nature">
        <title>Global analysis of protein expression in yeast.</title>
        <authorList>
            <person name="Ghaemmaghami S."/>
            <person name="Huh W.-K."/>
            <person name="Bower K."/>
            <person name="Howson R.W."/>
            <person name="Belle A."/>
            <person name="Dephoure N."/>
            <person name="O'Shea E.K."/>
            <person name="Weissman J.S."/>
        </authorList>
    </citation>
    <scope>LEVEL OF PROTEIN EXPRESSION [LARGE SCALE ANALYSIS]</scope>
</reference>
<reference key="9">
    <citation type="journal article" date="2006" name="J. Proteome Res.">
        <title>Toward the complete yeast mitochondrial proteome: multidimensional separation techniques for mitochondrial proteomics.</title>
        <authorList>
            <person name="Reinders J."/>
            <person name="Zahedi R.P."/>
            <person name="Pfanner N."/>
            <person name="Meisinger C."/>
            <person name="Sickmann A."/>
        </authorList>
    </citation>
    <scope>SUBCELLULAR LOCATION [LARGE SCALE ANALYSIS]</scope>
    <scope>IDENTIFICATION BY MASS SPECTROMETRY</scope>
</reference>
<accession>P49775</accession>
<accession>D6VST4</accession>
<accession>Q6TQU2</accession>
<accession>Q6TQU3</accession>
<protein>
    <recommendedName>
        <fullName>Bis(5'-adenosyl)-triphosphatase</fullName>
        <ecNumber>3.6.1.29</ecNumber>
    </recommendedName>
    <alternativeName>
        <fullName>AP3A hydrolase</fullName>
        <shortName>AP3Aase</shortName>
    </alternativeName>
    <alternativeName>
        <fullName>Diadenosine 5',5'''-P1,P3-triphosphate hydrolase</fullName>
    </alternativeName>
    <alternativeName>
        <fullName>Dinucleosidetriphosphatase</fullName>
    </alternativeName>
    <alternativeName>
        <fullName>Hit family protein 2</fullName>
    </alternativeName>
</protein>
<gene>
    <name type="primary">HNT2</name>
    <name type="synonym">APH1</name>
    <name type="ordered locus">YDR305C</name>
    <name type="ORF">D9740.15</name>
</gene>
<keyword id="KW-0963">Cytoplasm</keyword>
<keyword id="KW-0378">Hydrolase</keyword>
<keyword id="KW-0496">Mitochondrion</keyword>
<keyword id="KW-0547">Nucleotide-binding</keyword>
<keyword id="KW-0539">Nucleus</keyword>
<keyword id="KW-1185">Reference proteome</keyword>
<evidence type="ECO:0000250" key="1"/>
<evidence type="ECO:0000255" key="2">
    <source>
        <dbReference type="PROSITE-ProRule" id="PRU00464"/>
    </source>
</evidence>
<evidence type="ECO:0000256" key="3">
    <source>
        <dbReference type="SAM" id="MobiDB-lite"/>
    </source>
</evidence>
<evidence type="ECO:0000269" key="4">
    <source>
    </source>
</evidence>
<evidence type="ECO:0000269" key="5">
    <source>
    </source>
</evidence>
<evidence type="ECO:0000269" key="6">
    <source>
    </source>
</evidence>
<evidence type="ECO:0000269" key="7">
    <source>
    </source>
</evidence>
<evidence type="ECO:0000269" key="8">
    <source>
    </source>
</evidence>
<evidence type="ECO:0000305" key="9"/>
<organism>
    <name type="scientific">Saccharomyces cerevisiae (strain ATCC 204508 / S288c)</name>
    <name type="common">Baker's yeast</name>
    <dbReference type="NCBI Taxonomy" id="559292"/>
    <lineage>
        <taxon>Eukaryota</taxon>
        <taxon>Fungi</taxon>
        <taxon>Dikarya</taxon>
        <taxon>Ascomycota</taxon>
        <taxon>Saccharomycotina</taxon>
        <taxon>Saccharomycetes</taxon>
        <taxon>Saccharomycetales</taxon>
        <taxon>Saccharomycetaceae</taxon>
        <taxon>Saccharomyces</taxon>
    </lineage>
</organism>
<sequence length="206" mass="23542">MNKPIYFSKFLVTEQVFYKSKYTYALVNLKPIVPGHVLIVPLRTTVLNLSDLTMPESQDYFKTLQLIHRFIKWQYKADSINVAIQDGPEAGQSVPHLHTHIIPRYKINNVGDLIYDKLDHWDGNGTLTDWQGRRDEYLGVGGRQARKNNSTSATVDGDELSQGPNVLKPDSQRKVRALTEMKKEAEDLQARLEEFVSSDPGLTQWL</sequence>
<comment type="function">
    <text evidence="4 8">Cleaves A-5'-PPP-5'A to yield AMP and ADP. Can cleave all dinucleoside polyphosphates, provided the phosphate chain contains at least 3 phosphates and that 1 of the 2 bases composing the nucleotide is a purine. Is most effective on dinucleoside triphosphates. Negatively regulates intracellular dinucleoside polyphosphate levels, which elevate following heat shock.</text>
</comment>
<comment type="catalytic activity">
    <reaction>
        <text>P(1),P(3)-bis(5'-adenosyl) triphosphate + H2O = AMP + ADP + 2 H(+)</text>
        <dbReference type="Rhea" id="RHEA:13893"/>
        <dbReference type="ChEBI" id="CHEBI:15377"/>
        <dbReference type="ChEBI" id="CHEBI:15378"/>
        <dbReference type="ChEBI" id="CHEBI:58529"/>
        <dbReference type="ChEBI" id="CHEBI:456215"/>
        <dbReference type="ChEBI" id="CHEBI:456216"/>
        <dbReference type="EC" id="3.6.1.29"/>
    </reaction>
</comment>
<comment type="cofactor">
    <cofactor>
        <name>Mn(2+)</name>
        <dbReference type="ChEBI" id="CHEBI:29035"/>
    </cofactor>
    <text>Divalent metal cations. Mn(2+) is the preferred ion.</text>
</comment>
<comment type="biophysicochemical properties">
    <kinetics>
        <KM evidence="6">5.3 uM for P(1)-P(3)-bis(5'-adenosyl) triphosphate</KM>
    </kinetics>
</comment>
<comment type="subunit">
    <text evidence="1">Homodimer.</text>
</comment>
<comment type="subcellular location">
    <subcellularLocation>
        <location>Cytoplasm</location>
    </subcellularLocation>
    <subcellularLocation>
        <location>Nucleus</location>
    </subcellularLocation>
    <subcellularLocation>
        <location evidence="7">Mitochondrion</location>
    </subcellularLocation>
</comment>
<comment type="miscellaneous">
    <text evidence="5">Present with 1920 molecules/cell in log phase SD medium.</text>
</comment>
<comment type="sequence caution" evidence="9">
    <conflict type="erroneous initiation">
        <sequence resource="EMBL-CDS" id="AAB64741"/>
    </conflict>
    <text>Extended N-terminus.</text>
</comment>
<comment type="sequence caution" evidence="9">
    <conflict type="erroneous initiation">
        <sequence resource="EMBL-CDS" id="DAA12144"/>
    </conflict>
    <text>Extended N-terminus.</text>
</comment>
<proteinExistence type="evidence at protein level"/>
<feature type="chain" id="PRO_0000109801" description="Bis(5'-adenosyl)-triphosphatase">
    <location>
        <begin position="1"/>
        <end position="206"/>
    </location>
</feature>
<feature type="domain" description="HIT" evidence="2">
    <location>
        <begin position="3"/>
        <end position="115"/>
    </location>
</feature>
<feature type="region of interest" description="Disordered" evidence="3">
    <location>
        <begin position="143"/>
        <end position="164"/>
    </location>
</feature>
<feature type="short sequence motif" description="Histidine triad motif">
    <location>
        <begin position="96"/>
        <end position="100"/>
    </location>
</feature>
<feature type="active site" description="Tele-AMP-histidine intermediate" evidence="4">
    <location>
        <position position="98"/>
    </location>
</feature>
<feature type="mutagenesis site" description="Fails to reduce intracellular dinucleoside polyphosphate levels." evidence="4">
    <original>H</original>
    <variation>A</variation>
    <variation>D</variation>
    <location>
        <position position="98"/>
    </location>
</feature>
<dbReference type="EC" id="3.6.1.29"/>
<dbReference type="EMBL" id="U28374">
    <property type="protein sequence ID" value="AAB64741.1"/>
    <property type="status" value="ALT_INIT"/>
    <property type="molecule type" value="Genomic_DNA"/>
</dbReference>
<dbReference type="EMBL" id="AH013306">
    <property type="protein sequence ID" value="AAQ97228.1"/>
    <property type="molecule type" value="mRNA"/>
</dbReference>
<dbReference type="EMBL" id="AH013306">
    <property type="protein sequence ID" value="AAQ97227.1"/>
    <property type="molecule type" value="mRNA"/>
</dbReference>
<dbReference type="EMBL" id="BK006938">
    <property type="protein sequence ID" value="DAA12144.1"/>
    <property type="status" value="ALT_INIT"/>
    <property type="molecule type" value="Genomic_DNA"/>
</dbReference>
<dbReference type="PIR" id="S61191">
    <property type="entry name" value="S61191"/>
</dbReference>
<dbReference type="RefSeq" id="NP_010591.1">
    <property type="nucleotide sequence ID" value="NM_001180613.1"/>
</dbReference>
<dbReference type="SMR" id="P49775"/>
<dbReference type="BioGRID" id="32357">
    <property type="interactions" value="82"/>
</dbReference>
<dbReference type="DIP" id="DIP-4620N"/>
<dbReference type="FunCoup" id="P49775">
    <property type="interactions" value="223"/>
</dbReference>
<dbReference type="IntAct" id="P49775">
    <property type="interactions" value="1"/>
</dbReference>
<dbReference type="MINT" id="P49775"/>
<dbReference type="STRING" id="4932.YDR305C"/>
<dbReference type="iPTMnet" id="P49775"/>
<dbReference type="PaxDb" id="4932-YDR305C"/>
<dbReference type="PeptideAtlas" id="P49775"/>
<dbReference type="GeneID" id="851899"/>
<dbReference type="KEGG" id="sce:YDR305C"/>
<dbReference type="AGR" id="SGD:S000002713"/>
<dbReference type="SGD" id="S000002713">
    <property type="gene designation" value="HNT2"/>
</dbReference>
<dbReference type="eggNOG" id="KOG3379">
    <property type="taxonomic scope" value="Eukaryota"/>
</dbReference>
<dbReference type="HOGENOM" id="CLU_056776_7_2_1"/>
<dbReference type="InParanoid" id="P49775"/>
<dbReference type="OrthoDB" id="680339at2759"/>
<dbReference type="BioCyc" id="YEAST:G3O-29864-MONOMER"/>
<dbReference type="SABIO-RK" id="P49775"/>
<dbReference type="BioGRID-ORCS" id="851899">
    <property type="hits" value="0 hits in 10 CRISPR screens"/>
</dbReference>
<dbReference type="PRO" id="PR:P49775"/>
<dbReference type="Proteomes" id="UP000002311">
    <property type="component" value="Chromosome IV"/>
</dbReference>
<dbReference type="RNAct" id="P49775">
    <property type="molecule type" value="protein"/>
</dbReference>
<dbReference type="GO" id="GO:0005737">
    <property type="term" value="C:cytoplasm"/>
    <property type="evidence" value="ECO:0007005"/>
    <property type="project" value="SGD"/>
</dbReference>
<dbReference type="GO" id="GO:0005739">
    <property type="term" value="C:mitochondrion"/>
    <property type="evidence" value="ECO:0007005"/>
    <property type="project" value="SGD"/>
</dbReference>
<dbReference type="GO" id="GO:0005634">
    <property type="term" value="C:nucleus"/>
    <property type="evidence" value="ECO:0007005"/>
    <property type="project" value="SGD"/>
</dbReference>
<dbReference type="GO" id="GO:0047710">
    <property type="term" value="F:bis(5'-adenosyl)-triphosphatase activity"/>
    <property type="evidence" value="ECO:0007669"/>
    <property type="project" value="UniProtKB-EC"/>
</dbReference>
<dbReference type="GO" id="GO:0004081">
    <property type="term" value="F:bis(5'-nucleosyl)-tetraphosphatase (asymmetrical) activity"/>
    <property type="evidence" value="ECO:0000318"/>
    <property type="project" value="GO_Central"/>
</dbReference>
<dbReference type="GO" id="GO:0016787">
    <property type="term" value="F:hydrolase activity"/>
    <property type="evidence" value="ECO:0000314"/>
    <property type="project" value="SGD"/>
</dbReference>
<dbReference type="GO" id="GO:0000166">
    <property type="term" value="F:nucleotide binding"/>
    <property type="evidence" value="ECO:0007669"/>
    <property type="project" value="UniProtKB-KW"/>
</dbReference>
<dbReference type="GO" id="GO:0017111">
    <property type="term" value="F:ribonucleoside triphosphate phosphatase activity"/>
    <property type="evidence" value="ECO:0000314"/>
    <property type="project" value="SGD"/>
</dbReference>
<dbReference type="GO" id="GO:0009164">
    <property type="term" value="P:nucleoside catabolic process"/>
    <property type="evidence" value="ECO:0000315"/>
    <property type="project" value="SGD"/>
</dbReference>
<dbReference type="CDD" id="cd01275">
    <property type="entry name" value="FHIT"/>
    <property type="match status" value="1"/>
</dbReference>
<dbReference type="Gene3D" id="3.30.428.10">
    <property type="entry name" value="HIT-like"/>
    <property type="match status" value="1"/>
</dbReference>
<dbReference type="InterPro" id="IPR051884">
    <property type="entry name" value="Bis(5'-adenosyl)-TPase_reg"/>
</dbReference>
<dbReference type="InterPro" id="IPR039383">
    <property type="entry name" value="FHIT"/>
</dbReference>
<dbReference type="InterPro" id="IPR019808">
    <property type="entry name" value="Histidine_triad_CS"/>
</dbReference>
<dbReference type="InterPro" id="IPR011146">
    <property type="entry name" value="HIT-like"/>
</dbReference>
<dbReference type="InterPro" id="IPR036265">
    <property type="entry name" value="HIT-like_sf"/>
</dbReference>
<dbReference type="PANTHER" id="PTHR46243">
    <property type="entry name" value="BIS(5'-ADENOSYL)-TRIPHOSPHATASE"/>
    <property type="match status" value="1"/>
</dbReference>
<dbReference type="PANTHER" id="PTHR46243:SF1">
    <property type="entry name" value="BIS(5'-ADENOSYL)-TRIPHOSPHATASE"/>
    <property type="match status" value="1"/>
</dbReference>
<dbReference type="Pfam" id="PF01230">
    <property type="entry name" value="HIT"/>
    <property type="match status" value="1"/>
</dbReference>
<dbReference type="SUPFAM" id="SSF54197">
    <property type="entry name" value="HIT-like"/>
    <property type="match status" value="1"/>
</dbReference>
<dbReference type="PROSITE" id="PS00892">
    <property type="entry name" value="HIT_1"/>
    <property type="match status" value="1"/>
</dbReference>
<dbReference type="PROSITE" id="PS51084">
    <property type="entry name" value="HIT_2"/>
    <property type="match status" value="1"/>
</dbReference>